<keyword id="KW-0053">Apoptosis</keyword>
<keyword id="KW-0378">Hydrolase</keyword>
<keyword id="KW-0539">Nucleus</keyword>
<keyword id="KW-0645">Protease</keyword>
<keyword id="KW-1185">Reference proteome</keyword>
<keyword id="KW-0677">Repeat</keyword>
<keyword id="KW-0720">Serine protease</keyword>
<dbReference type="EC" id="3.4.21.-"/>
<dbReference type="EMBL" id="CR382126">
    <property type="protein sequence ID" value="CAG98861.1"/>
    <property type="molecule type" value="Genomic_DNA"/>
</dbReference>
<dbReference type="RefSeq" id="XP_456153.1">
    <property type="nucleotide sequence ID" value="XM_456153.1"/>
</dbReference>
<dbReference type="SMR" id="Q6CIT6"/>
<dbReference type="FunCoup" id="Q6CIT6">
    <property type="interactions" value="144"/>
</dbReference>
<dbReference type="STRING" id="284590.Q6CIT6"/>
<dbReference type="PaxDb" id="284590-Q6CIT6"/>
<dbReference type="KEGG" id="kla:KLLA0_F24090g"/>
<dbReference type="eggNOG" id="KOG1421">
    <property type="taxonomic scope" value="Eukaryota"/>
</dbReference>
<dbReference type="HOGENOM" id="CLU_003212_0_0_1"/>
<dbReference type="InParanoid" id="Q6CIT6"/>
<dbReference type="OMA" id="FWGHCVF"/>
<dbReference type="Proteomes" id="UP000000598">
    <property type="component" value="Chromosome F"/>
</dbReference>
<dbReference type="GO" id="GO:0005634">
    <property type="term" value="C:nucleus"/>
    <property type="evidence" value="ECO:0007669"/>
    <property type="project" value="UniProtKB-SubCell"/>
</dbReference>
<dbReference type="GO" id="GO:0004252">
    <property type="term" value="F:serine-type endopeptidase activity"/>
    <property type="evidence" value="ECO:0007669"/>
    <property type="project" value="InterPro"/>
</dbReference>
<dbReference type="GO" id="GO:0006915">
    <property type="term" value="P:apoptotic process"/>
    <property type="evidence" value="ECO:0007669"/>
    <property type="project" value="UniProtKB-KW"/>
</dbReference>
<dbReference type="GO" id="GO:0006508">
    <property type="term" value="P:proteolysis"/>
    <property type="evidence" value="ECO:0007669"/>
    <property type="project" value="UniProtKB-KW"/>
</dbReference>
<dbReference type="CDD" id="cd06786">
    <property type="entry name" value="cpPDZ1_ScNma111-like"/>
    <property type="match status" value="1"/>
</dbReference>
<dbReference type="CDD" id="cd10827">
    <property type="entry name" value="cpPDZ3_ScNma111-like"/>
    <property type="match status" value="1"/>
</dbReference>
<dbReference type="CDD" id="cd06719">
    <property type="entry name" value="PDZ2-4_Nma111p-like"/>
    <property type="match status" value="2"/>
</dbReference>
<dbReference type="FunFam" id="2.40.10.120:FF:000013">
    <property type="entry name" value="Pro-apoptotic serine protease NMA111"/>
    <property type="match status" value="1"/>
</dbReference>
<dbReference type="Gene3D" id="2.30.42.10">
    <property type="match status" value="2"/>
</dbReference>
<dbReference type="Gene3D" id="2.40.10.120">
    <property type="match status" value="1"/>
</dbReference>
<dbReference type="Gene3D" id="2.40.10.10">
    <property type="entry name" value="Trypsin-like serine proteases"/>
    <property type="match status" value="2"/>
</dbReference>
<dbReference type="InterPro" id="IPR001478">
    <property type="entry name" value="PDZ"/>
</dbReference>
<dbReference type="InterPro" id="IPR025926">
    <property type="entry name" value="PDZ-like_dom"/>
</dbReference>
<dbReference type="InterPro" id="IPR041489">
    <property type="entry name" value="PDZ_6"/>
</dbReference>
<dbReference type="InterPro" id="IPR036034">
    <property type="entry name" value="PDZ_sf"/>
</dbReference>
<dbReference type="InterPro" id="IPR009003">
    <property type="entry name" value="Peptidase_S1_PA"/>
</dbReference>
<dbReference type="InterPro" id="IPR043504">
    <property type="entry name" value="Peptidase_S1_PA_chymotrypsin"/>
</dbReference>
<dbReference type="InterPro" id="IPR001940">
    <property type="entry name" value="Peptidase_S1C"/>
</dbReference>
<dbReference type="PANTHER" id="PTHR46366">
    <property type="entry name" value="PRO-APOPTOTIC SERINE PROTEASE NMA111"/>
    <property type="match status" value="1"/>
</dbReference>
<dbReference type="PANTHER" id="PTHR46366:SF8">
    <property type="entry name" value="PRO-APOPTOTIC SERINE PROTEASE NMA111"/>
    <property type="match status" value="1"/>
</dbReference>
<dbReference type="Pfam" id="PF12812">
    <property type="entry name" value="PDZ_1"/>
    <property type="match status" value="2"/>
</dbReference>
<dbReference type="Pfam" id="PF17820">
    <property type="entry name" value="PDZ_6"/>
    <property type="match status" value="1"/>
</dbReference>
<dbReference type="Pfam" id="PF13365">
    <property type="entry name" value="Trypsin_2"/>
    <property type="match status" value="1"/>
</dbReference>
<dbReference type="PRINTS" id="PR00834">
    <property type="entry name" value="PROTEASES2C"/>
</dbReference>
<dbReference type="SMART" id="SM00228">
    <property type="entry name" value="PDZ"/>
    <property type="match status" value="2"/>
</dbReference>
<dbReference type="SUPFAM" id="SSF50156">
    <property type="entry name" value="PDZ domain-like"/>
    <property type="match status" value="2"/>
</dbReference>
<dbReference type="SUPFAM" id="SSF50494">
    <property type="entry name" value="Trypsin-like serine proteases"/>
    <property type="match status" value="2"/>
</dbReference>
<evidence type="ECO:0000250" key="1"/>
<evidence type="ECO:0000255" key="2"/>
<evidence type="ECO:0000305" key="3"/>
<accession>Q6CIT6</accession>
<feature type="chain" id="PRO_0000320353" description="Pro-apoptotic serine protease NMA111">
    <location>
        <begin position="1"/>
        <end position="985"/>
    </location>
</feature>
<feature type="domain" description="PDZ 1">
    <location>
        <begin position="287"/>
        <end position="385"/>
    </location>
</feature>
<feature type="domain" description="PDZ 2">
    <location>
        <begin position="771"/>
        <end position="847"/>
    </location>
</feature>
<feature type="region of interest" description="Serine protease">
    <location>
        <begin position="79"/>
        <end position="269"/>
    </location>
</feature>
<feature type="active site" description="Charge relay system" evidence="2">
    <location>
        <position position="117"/>
    </location>
</feature>
<feature type="active site" description="Charge relay system" evidence="2">
    <location>
        <position position="148"/>
    </location>
</feature>
<feature type="active site" description="Charge relay system" evidence="2">
    <location>
        <position position="231"/>
    </location>
</feature>
<sequence>MTVELKRNLLESSVEDIDLESKKQRVDNDVDQNTSSVDEDIDYEEDYDEVNDVPIDSGNSLFNNNAKWQETISKVVKSVVSIHFSQVAPFDSEAALVSEATGFIVDAKLGIILTNRHVVGPGPFIGYAIFDNHEECDVIPIYRDPVHDFGFLKFDPSKLKYIEVTALELKPSLAKVGSEIRVVGNDAGEKLSILSGFISRLDRNAPDYGELTYNDFNTEYIQAAAAASGGSSGSPVITVEGYAVALQAGGSSEASTDFFLPLDRVVRALQCVQTDKPITRGTIQTQWVLKPFDECRRLGLSEDREKEARKRFPGKTGLLVAEAILREGPAYNKVQEGDTLISINGTPICSFIQVDNILDSSVGDEIIIVVQRGSKDISFRCTVGDLHIITPSRYVEVCGANFHELSYQMARCYALPVKGVFVASATGSFDLDPKEKTGWVIDFVDNKETPTLDDFIEVMKTIPDEKRVIVKFHNLTDVQTQRITSVYIDRHWCSEFRIYTRNDKTGIWDYEKITEKLPPLPIKPQKAKILDLPINDNKKLAKMSHSLCVVHSVIAITMDSMEPEPTNGCGLVLDAEKGYVIVSRSFVPHDCLNTFVSFAESILVPAKVVFLHPTQNYAIVQYDPSLVDAPVCTPVLANERLERGDETNFIGYMYSNTLISSKTKVNGISSLSVPNDIIPRYRATNLEVISIDSNISTKCKSGILAADDGTVRAIWLSCMGNKEKLYLMGLDVVDIKEVVDILRAGKNPKVSIVDAGFDSISLLQARIRGVPEEWIKMMEEESENRLQFISVTRNSYTTIKERLEPGDIILSVNGKLVKRMRDIGGVVGTDDDTDIESELLFKVVRDAKVIDLKIKTVQIEETTRIVVFAGCVLQAPHHAVRQVKTSIPSEVYAVSRGTSSLALQYGIEVTNFITHVNDQSTPDLDTFLKVVKEIPDNTYCKLRLMTFDDVPFAISLKTNYHYFPTVELRKNPKTGSWIENDISET</sequence>
<name>NM111_KLULA</name>
<comment type="function">
    <text evidence="1">Nuclear serine protease which mediates apoptosis.</text>
</comment>
<comment type="subcellular location">
    <subcellularLocation>
        <location evidence="1">Nucleus</location>
    </subcellularLocation>
</comment>
<comment type="similarity">
    <text evidence="3">Belongs to the peptidase S1C family.</text>
</comment>
<protein>
    <recommendedName>
        <fullName>Pro-apoptotic serine protease NMA111</fullName>
        <ecNumber>3.4.21.-</ecNumber>
    </recommendedName>
</protein>
<proteinExistence type="inferred from homology"/>
<reference key="1">
    <citation type="journal article" date="2004" name="Nature">
        <title>Genome evolution in yeasts.</title>
        <authorList>
            <person name="Dujon B."/>
            <person name="Sherman D."/>
            <person name="Fischer G."/>
            <person name="Durrens P."/>
            <person name="Casaregola S."/>
            <person name="Lafontaine I."/>
            <person name="de Montigny J."/>
            <person name="Marck C."/>
            <person name="Neuveglise C."/>
            <person name="Talla E."/>
            <person name="Goffard N."/>
            <person name="Frangeul L."/>
            <person name="Aigle M."/>
            <person name="Anthouard V."/>
            <person name="Babour A."/>
            <person name="Barbe V."/>
            <person name="Barnay S."/>
            <person name="Blanchin S."/>
            <person name="Beckerich J.-M."/>
            <person name="Beyne E."/>
            <person name="Bleykasten C."/>
            <person name="Boisrame A."/>
            <person name="Boyer J."/>
            <person name="Cattolico L."/>
            <person name="Confanioleri F."/>
            <person name="de Daruvar A."/>
            <person name="Despons L."/>
            <person name="Fabre E."/>
            <person name="Fairhead C."/>
            <person name="Ferry-Dumazet H."/>
            <person name="Groppi A."/>
            <person name="Hantraye F."/>
            <person name="Hennequin C."/>
            <person name="Jauniaux N."/>
            <person name="Joyet P."/>
            <person name="Kachouri R."/>
            <person name="Kerrest A."/>
            <person name="Koszul R."/>
            <person name="Lemaire M."/>
            <person name="Lesur I."/>
            <person name="Ma L."/>
            <person name="Muller H."/>
            <person name="Nicaud J.-M."/>
            <person name="Nikolski M."/>
            <person name="Oztas S."/>
            <person name="Ozier-Kalogeropoulos O."/>
            <person name="Pellenz S."/>
            <person name="Potier S."/>
            <person name="Richard G.-F."/>
            <person name="Straub M.-L."/>
            <person name="Suleau A."/>
            <person name="Swennen D."/>
            <person name="Tekaia F."/>
            <person name="Wesolowski-Louvel M."/>
            <person name="Westhof E."/>
            <person name="Wirth B."/>
            <person name="Zeniou-Meyer M."/>
            <person name="Zivanovic Y."/>
            <person name="Bolotin-Fukuhara M."/>
            <person name="Thierry A."/>
            <person name="Bouchier C."/>
            <person name="Caudron B."/>
            <person name="Scarpelli C."/>
            <person name="Gaillardin C."/>
            <person name="Weissenbach J."/>
            <person name="Wincker P."/>
            <person name="Souciet J.-L."/>
        </authorList>
    </citation>
    <scope>NUCLEOTIDE SEQUENCE [LARGE SCALE GENOMIC DNA]</scope>
    <source>
        <strain>ATCC 8585 / CBS 2359 / DSM 70799 / NBRC 1267 / NRRL Y-1140 / WM37</strain>
    </source>
</reference>
<gene>
    <name type="primary">NMA111</name>
    <name type="ordered locus">KLLA0F24090g</name>
</gene>
<organism>
    <name type="scientific">Kluyveromyces lactis (strain ATCC 8585 / CBS 2359 / DSM 70799 / NBRC 1267 / NRRL Y-1140 / WM37)</name>
    <name type="common">Yeast</name>
    <name type="synonym">Candida sphaerica</name>
    <dbReference type="NCBI Taxonomy" id="284590"/>
    <lineage>
        <taxon>Eukaryota</taxon>
        <taxon>Fungi</taxon>
        <taxon>Dikarya</taxon>
        <taxon>Ascomycota</taxon>
        <taxon>Saccharomycotina</taxon>
        <taxon>Saccharomycetes</taxon>
        <taxon>Saccharomycetales</taxon>
        <taxon>Saccharomycetaceae</taxon>
        <taxon>Kluyveromyces</taxon>
    </lineage>
</organism>